<feature type="chain" id="PRO_1000051539" description="Global transcriptional regulator CodY">
    <location>
        <begin position="1"/>
        <end position="262"/>
    </location>
</feature>
<feature type="DNA-binding region" description="H-T-H motif" evidence="1">
    <location>
        <begin position="207"/>
        <end position="226"/>
    </location>
</feature>
<feature type="region of interest" description="GAF domain" evidence="1">
    <location>
        <begin position="1"/>
        <end position="159"/>
    </location>
</feature>
<proteinExistence type="inferred from homology"/>
<name>CODY_LACLS</name>
<evidence type="ECO:0000255" key="1">
    <source>
        <dbReference type="HAMAP-Rule" id="MF_00621"/>
    </source>
</evidence>
<sequence length="262" mass="29144">MATLLEKTRKITAILQDGVTDLQQELPYNSMTERLANVIDCNACVINTKGELLGYSLPYNTNNDRVDQFFYDRKLPDEYVRAAVRVYDTMANVPVDRPLAIFPEESLSDFPKGVTTLAPIYGSGMRLGTFIMWREDGEFTDDDLVLVELATTVIGVQLSNLKLEQMEENIRKDTMATMAVNTLSYSEMKAVKAIIEELDGEEGHVIASVIADKIGITRSVIVNALRKLESAGVIESRSLGMKGTYLKVLNTGLFDKLAGRNF</sequence>
<gene>
    <name evidence="1" type="primary">codY</name>
    <name type="ordered locus">LACR_0168</name>
</gene>
<keyword id="KW-0963">Cytoplasm</keyword>
<keyword id="KW-0238">DNA-binding</keyword>
<keyword id="KW-0678">Repressor</keyword>
<keyword id="KW-0804">Transcription</keyword>
<keyword id="KW-0805">Transcription regulation</keyword>
<comment type="function">
    <text evidence="1">DNA-binding global transcriptional regulator which is involved in the adaptive response to starvation and acts by directly or indirectly controlling the expression of numerous genes in response to nutrient availability. During rapid exponential growth, CodY is highly active and represses genes whose products allow adaptation to nutrient depletion.</text>
</comment>
<comment type="subcellular location">
    <subcellularLocation>
        <location evidence="1">Cytoplasm</location>
    </subcellularLocation>
</comment>
<comment type="similarity">
    <text evidence="1">Belongs to the CodY family.</text>
</comment>
<accession>Q032T5</accession>
<reference key="1">
    <citation type="journal article" date="2006" name="Proc. Natl. Acad. Sci. U.S.A.">
        <title>Comparative genomics of the lactic acid bacteria.</title>
        <authorList>
            <person name="Makarova K.S."/>
            <person name="Slesarev A."/>
            <person name="Wolf Y.I."/>
            <person name="Sorokin A."/>
            <person name="Mirkin B."/>
            <person name="Koonin E.V."/>
            <person name="Pavlov A."/>
            <person name="Pavlova N."/>
            <person name="Karamychev V."/>
            <person name="Polouchine N."/>
            <person name="Shakhova V."/>
            <person name="Grigoriev I."/>
            <person name="Lou Y."/>
            <person name="Rohksar D."/>
            <person name="Lucas S."/>
            <person name="Huang K."/>
            <person name="Goodstein D.M."/>
            <person name="Hawkins T."/>
            <person name="Plengvidhya V."/>
            <person name="Welker D."/>
            <person name="Hughes J."/>
            <person name="Goh Y."/>
            <person name="Benson A."/>
            <person name="Baldwin K."/>
            <person name="Lee J.-H."/>
            <person name="Diaz-Muniz I."/>
            <person name="Dosti B."/>
            <person name="Smeianov V."/>
            <person name="Wechter W."/>
            <person name="Barabote R."/>
            <person name="Lorca G."/>
            <person name="Altermann E."/>
            <person name="Barrangou R."/>
            <person name="Ganesan B."/>
            <person name="Xie Y."/>
            <person name="Rawsthorne H."/>
            <person name="Tamir D."/>
            <person name="Parker C."/>
            <person name="Breidt F."/>
            <person name="Broadbent J.R."/>
            <person name="Hutkins R."/>
            <person name="O'Sullivan D."/>
            <person name="Steele J."/>
            <person name="Unlu G."/>
            <person name="Saier M.H. Jr."/>
            <person name="Klaenhammer T."/>
            <person name="Richardson P."/>
            <person name="Kozyavkin S."/>
            <person name="Weimer B.C."/>
            <person name="Mills D.A."/>
        </authorList>
    </citation>
    <scope>NUCLEOTIDE SEQUENCE [LARGE SCALE GENOMIC DNA]</scope>
    <source>
        <strain>SK11</strain>
    </source>
</reference>
<organism>
    <name type="scientific">Lactococcus lactis subsp. cremoris (strain SK11)</name>
    <dbReference type="NCBI Taxonomy" id="272622"/>
    <lineage>
        <taxon>Bacteria</taxon>
        <taxon>Bacillati</taxon>
        <taxon>Bacillota</taxon>
        <taxon>Bacilli</taxon>
        <taxon>Lactobacillales</taxon>
        <taxon>Streptococcaceae</taxon>
        <taxon>Lactococcus</taxon>
        <taxon>Lactococcus cremoris subsp. cremoris</taxon>
    </lineage>
</organism>
<dbReference type="EMBL" id="CP000425">
    <property type="protein sequence ID" value="ABJ71787.1"/>
    <property type="molecule type" value="Genomic_DNA"/>
</dbReference>
<dbReference type="RefSeq" id="WP_011675220.1">
    <property type="nucleotide sequence ID" value="NC_008527.1"/>
</dbReference>
<dbReference type="SMR" id="Q032T5"/>
<dbReference type="KEGG" id="llc:LACR_0168"/>
<dbReference type="HOGENOM" id="CLU_089581_0_0_9"/>
<dbReference type="Proteomes" id="UP000000240">
    <property type="component" value="Chromosome"/>
</dbReference>
<dbReference type="GO" id="GO:0005737">
    <property type="term" value="C:cytoplasm"/>
    <property type="evidence" value="ECO:0007669"/>
    <property type="project" value="UniProtKB-SubCell"/>
</dbReference>
<dbReference type="GO" id="GO:0003677">
    <property type="term" value="F:DNA binding"/>
    <property type="evidence" value="ECO:0007669"/>
    <property type="project" value="UniProtKB-UniRule"/>
</dbReference>
<dbReference type="GO" id="GO:0003700">
    <property type="term" value="F:DNA-binding transcription factor activity"/>
    <property type="evidence" value="ECO:0007669"/>
    <property type="project" value="InterPro"/>
</dbReference>
<dbReference type="GO" id="GO:0005525">
    <property type="term" value="F:GTP binding"/>
    <property type="evidence" value="ECO:0007669"/>
    <property type="project" value="InterPro"/>
</dbReference>
<dbReference type="GO" id="GO:0045892">
    <property type="term" value="P:negative regulation of DNA-templated transcription"/>
    <property type="evidence" value="ECO:0007669"/>
    <property type="project" value="UniProtKB-UniRule"/>
</dbReference>
<dbReference type="FunFam" id="1.10.10.10:FF:000034">
    <property type="entry name" value="GTP-sensing transcriptional pleiotropic repressor CodY"/>
    <property type="match status" value="1"/>
</dbReference>
<dbReference type="FunFam" id="3.30.450.40:FF:000003">
    <property type="entry name" value="GTP-sensing transcriptional pleiotropic repressor CodY"/>
    <property type="match status" value="1"/>
</dbReference>
<dbReference type="Gene3D" id="3.30.450.40">
    <property type="match status" value="1"/>
</dbReference>
<dbReference type="Gene3D" id="1.10.10.10">
    <property type="entry name" value="Winged helix-like DNA-binding domain superfamily/Winged helix DNA-binding domain"/>
    <property type="match status" value="1"/>
</dbReference>
<dbReference type="HAMAP" id="MF_00621">
    <property type="entry name" value="HTH_type_CodY"/>
    <property type="match status" value="1"/>
</dbReference>
<dbReference type="InterPro" id="IPR014154">
    <property type="entry name" value="CodY"/>
</dbReference>
<dbReference type="InterPro" id="IPR029016">
    <property type="entry name" value="GAF-like_dom_sf"/>
</dbReference>
<dbReference type="InterPro" id="IPR013198">
    <property type="entry name" value="GTP_trans_reg_CodY_C"/>
</dbReference>
<dbReference type="InterPro" id="IPR010312">
    <property type="entry name" value="Transc_reg_CodY_N"/>
</dbReference>
<dbReference type="InterPro" id="IPR036388">
    <property type="entry name" value="WH-like_DNA-bd_sf"/>
</dbReference>
<dbReference type="InterPro" id="IPR036390">
    <property type="entry name" value="WH_DNA-bd_sf"/>
</dbReference>
<dbReference type="NCBIfam" id="TIGR02787">
    <property type="entry name" value="codY_Gpos"/>
    <property type="match status" value="1"/>
</dbReference>
<dbReference type="NCBIfam" id="NF003170">
    <property type="entry name" value="PRK04158.1"/>
    <property type="match status" value="1"/>
</dbReference>
<dbReference type="PANTHER" id="PTHR40062:SF1">
    <property type="entry name" value="GLOBAL TRANSCRIPTIONAL REGULATOR CODY"/>
    <property type="match status" value="1"/>
</dbReference>
<dbReference type="PANTHER" id="PTHR40062">
    <property type="entry name" value="GTP-SENSING TRANSCRIPTIONAL PLEIOTROPIC REPRESSOR CODY"/>
    <property type="match status" value="1"/>
</dbReference>
<dbReference type="Pfam" id="PF06018">
    <property type="entry name" value="CodY"/>
    <property type="match status" value="1"/>
</dbReference>
<dbReference type="Pfam" id="PF08222">
    <property type="entry name" value="HTH_CodY"/>
    <property type="match status" value="1"/>
</dbReference>
<dbReference type="PIRSF" id="PIRSF011572">
    <property type="entry name" value="GTP_sensing_CodY"/>
    <property type="match status" value="1"/>
</dbReference>
<dbReference type="SUPFAM" id="SSF46785">
    <property type="entry name" value="Winged helix' DNA-binding domain"/>
    <property type="match status" value="1"/>
</dbReference>
<protein>
    <recommendedName>
        <fullName evidence="1">Global transcriptional regulator CodY</fullName>
    </recommendedName>
</protein>